<gene>
    <name evidence="1" type="primary">dcd</name>
    <name type="ordered locus">CKO_00716</name>
</gene>
<reference key="1">
    <citation type="submission" date="2007-08" db="EMBL/GenBank/DDBJ databases">
        <authorList>
            <consortium name="The Citrobacter koseri Genome Sequencing Project"/>
            <person name="McClelland M."/>
            <person name="Sanderson E.K."/>
            <person name="Porwollik S."/>
            <person name="Spieth J."/>
            <person name="Clifton W.S."/>
            <person name="Latreille P."/>
            <person name="Courtney L."/>
            <person name="Wang C."/>
            <person name="Pepin K."/>
            <person name="Bhonagiri V."/>
            <person name="Nash W."/>
            <person name="Johnson M."/>
            <person name="Thiruvilangam P."/>
            <person name="Wilson R."/>
        </authorList>
    </citation>
    <scope>NUCLEOTIDE SEQUENCE [LARGE SCALE GENOMIC DNA]</scope>
    <source>
        <strain>ATCC BAA-895 / CDC 4225-83 / SGSC4696</strain>
    </source>
</reference>
<protein>
    <recommendedName>
        <fullName evidence="1">dCTP deaminase</fullName>
        <ecNumber evidence="1">3.5.4.13</ecNumber>
    </recommendedName>
    <alternativeName>
        <fullName evidence="1">Deoxycytidine triphosphate deaminase</fullName>
    </alternativeName>
</protein>
<dbReference type="EC" id="3.5.4.13" evidence="1"/>
<dbReference type="EMBL" id="CP000822">
    <property type="protein sequence ID" value="ABV11868.1"/>
    <property type="molecule type" value="Genomic_DNA"/>
</dbReference>
<dbReference type="RefSeq" id="WP_012131692.1">
    <property type="nucleotide sequence ID" value="NC_009792.1"/>
</dbReference>
<dbReference type="SMR" id="A8AEF5"/>
<dbReference type="STRING" id="290338.CKO_00716"/>
<dbReference type="GeneID" id="45134928"/>
<dbReference type="KEGG" id="cko:CKO_00716"/>
<dbReference type="HOGENOM" id="CLU_087476_2_0_6"/>
<dbReference type="OrthoDB" id="9780956at2"/>
<dbReference type="UniPathway" id="UPA00610">
    <property type="reaction ID" value="UER00665"/>
</dbReference>
<dbReference type="Proteomes" id="UP000008148">
    <property type="component" value="Chromosome"/>
</dbReference>
<dbReference type="GO" id="GO:0008829">
    <property type="term" value="F:dCTP deaminase activity"/>
    <property type="evidence" value="ECO:0007669"/>
    <property type="project" value="UniProtKB-UniRule"/>
</dbReference>
<dbReference type="GO" id="GO:0000166">
    <property type="term" value="F:nucleotide binding"/>
    <property type="evidence" value="ECO:0007669"/>
    <property type="project" value="UniProtKB-KW"/>
</dbReference>
<dbReference type="GO" id="GO:0006226">
    <property type="term" value="P:dUMP biosynthetic process"/>
    <property type="evidence" value="ECO:0007669"/>
    <property type="project" value="UniProtKB-UniPathway"/>
</dbReference>
<dbReference type="GO" id="GO:0006229">
    <property type="term" value="P:dUTP biosynthetic process"/>
    <property type="evidence" value="ECO:0007669"/>
    <property type="project" value="UniProtKB-UniRule"/>
</dbReference>
<dbReference type="GO" id="GO:0015949">
    <property type="term" value="P:nucleobase-containing small molecule interconversion"/>
    <property type="evidence" value="ECO:0007669"/>
    <property type="project" value="TreeGrafter"/>
</dbReference>
<dbReference type="CDD" id="cd07557">
    <property type="entry name" value="trimeric_dUTPase"/>
    <property type="match status" value="1"/>
</dbReference>
<dbReference type="FunFam" id="2.70.40.10:FF:000003">
    <property type="entry name" value="dCTP deaminase"/>
    <property type="match status" value="1"/>
</dbReference>
<dbReference type="Gene3D" id="2.70.40.10">
    <property type="match status" value="1"/>
</dbReference>
<dbReference type="HAMAP" id="MF_00146">
    <property type="entry name" value="dCTP_deaminase"/>
    <property type="match status" value="1"/>
</dbReference>
<dbReference type="InterPro" id="IPR011962">
    <property type="entry name" value="dCTP_deaminase"/>
</dbReference>
<dbReference type="InterPro" id="IPR036157">
    <property type="entry name" value="dUTPase-like_sf"/>
</dbReference>
<dbReference type="InterPro" id="IPR033704">
    <property type="entry name" value="dUTPase_trimeric"/>
</dbReference>
<dbReference type="NCBIfam" id="TIGR02274">
    <property type="entry name" value="dCTP_deam"/>
    <property type="match status" value="1"/>
</dbReference>
<dbReference type="PANTHER" id="PTHR42680">
    <property type="entry name" value="DCTP DEAMINASE"/>
    <property type="match status" value="1"/>
</dbReference>
<dbReference type="PANTHER" id="PTHR42680:SF3">
    <property type="entry name" value="DCTP DEAMINASE"/>
    <property type="match status" value="1"/>
</dbReference>
<dbReference type="Pfam" id="PF22769">
    <property type="entry name" value="DCD"/>
    <property type="match status" value="1"/>
</dbReference>
<dbReference type="SUPFAM" id="SSF51283">
    <property type="entry name" value="dUTPase-like"/>
    <property type="match status" value="1"/>
</dbReference>
<accession>A8AEF5</accession>
<keyword id="KW-0378">Hydrolase</keyword>
<keyword id="KW-0546">Nucleotide metabolism</keyword>
<keyword id="KW-0547">Nucleotide-binding</keyword>
<keyword id="KW-1185">Reference proteome</keyword>
<organism>
    <name type="scientific">Citrobacter koseri (strain ATCC BAA-895 / CDC 4225-83 / SGSC4696)</name>
    <dbReference type="NCBI Taxonomy" id="290338"/>
    <lineage>
        <taxon>Bacteria</taxon>
        <taxon>Pseudomonadati</taxon>
        <taxon>Pseudomonadota</taxon>
        <taxon>Gammaproteobacteria</taxon>
        <taxon>Enterobacterales</taxon>
        <taxon>Enterobacteriaceae</taxon>
        <taxon>Citrobacter</taxon>
    </lineage>
</organism>
<name>DCD_CITK8</name>
<sequence length="193" mass="21267">MRLCDRDIEAWLDEGRLSINPRPPVERINGATVDVRLGNKFRTFRGHTAAFIDLSGPKDEVSAALDRVMSDEIVLDEGDAFYLHPGELALAVTFESVTLPPDLVGWLDGRSSLARLGLMVHVTAHRIDPGWSGCIVLEFYNSGKLPLALRPGMLIGALSFEPLSGPAARPYNRRQDAKYRDQQGAVASRIDKD</sequence>
<evidence type="ECO:0000255" key="1">
    <source>
        <dbReference type="HAMAP-Rule" id="MF_00146"/>
    </source>
</evidence>
<evidence type="ECO:0000256" key="2">
    <source>
        <dbReference type="SAM" id="MobiDB-lite"/>
    </source>
</evidence>
<comment type="function">
    <text evidence="1">Catalyzes the deamination of dCTP to dUTP.</text>
</comment>
<comment type="catalytic activity">
    <reaction evidence="1">
        <text>dCTP + H2O + H(+) = dUTP + NH4(+)</text>
        <dbReference type="Rhea" id="RHEA:22680"/>
        <dbReference type="ChEBI" id="CHEBI:15377"/>
        <dbReference type="ChEBI" id="CHEBI:15378"/>
        <dbReference type="ChEBI" id="CHEBI:28938"/>
        <dbReference type="ChEBI" id="CHEBI:61481"/>
        <dbReference type="ChEBI" id="CHEBI:61555"/>
        <dbReference type="EC" id="3.5.4.13"/>
    </reaction>
</comment>
<comment type="pathway">
    <text evidence="1">Pyrimidine metabolism; dUMP biosynthesis; dUMP from dCTP (dUTP route): step 1/2.</text>
</comment>
<comment type="subunit">
    <text evidence="1">Homotrimer.</text>
</comment>
<comment type="similarity">
    <text evidence="1">Belongs to the dCTP deaminase family.</text>
</comment>
<proteinExistence type="inferred from homology"/>
<feature type="chain" id="PRO_1000009707" description="dCTP deaminase">
    <location>
        <begin position="1"/>
        <end position="193"/>
    </location>
</feature>
<feature type="region of interest" description="Disordered" evidence="2">
    <location>
        <begin position="169"/>
        <end position="193"/>
    </location>
</feature>
<feature type="active site" description="Proton donor/acceptor" evidence="1">
    <location>
        <position position="138"/>
    </location>
</feature>
<feature type="binding site" evidence="1">
    <location>
        <begin position="110"/>
        <end position="115"/>
    </location>
    <ligand>
        <name>dCTP</name>
        <dbReference type="ChEBI" id="CHEBI:61481"/>
    </ligand>
</feature>
<feature type="binding site" evidence="1">
    <location>
        <position position="128"/>
    </location>
    <ligand>
        <name>dCTP</name>
        <dbReference type="ChEBI" id="CHEBI:61481"/>
    </ligand>
</feature>
<feature type="binding site" evidence="1">
    <location>
        <begin position="136"/>
        <end position="138"/>
    </location>
    <ligand>
        <name>dCTP</name>
        <dbReference type="ChEBI" id="CHEBI:61481"/>
    </ligand>
</feature>
<feature type="binding site" evidence="1">
    <location>
        <position position="171"/>
    </location>
    <ligand>
        <name>dCTP</name>
        <dbReference type="ChEBI" id="CHEBI:61481"/>
    </ligand>
</feature>
<feature type="binding site" evidence="1">
    <location>
        <position position="178"/>
    </location>
    <ligand>
        <name>dCTP</name>
        <dbReference type="ChEBI" id="CHEBI:61481"/>
    </ligand>
</feature>
<feature type="binding site" evidence="1">
    <location>
        <position position="182"/>
    </location>
    <ligand>
        <name>dCTP</name>
        <dbReference type="ChEBI" id="CHEBI:61481"/>
    </ligand>
</feature>